<sequence>MNYFELFGLPIQFELDGSLLSSQFRALQKRFHPDNFATASERDRLMAVQQAAQINDAYQTLKDPLRRAEYLLSLQGIEMNAEQQTLQDPMFLMEQMELREELESVTACADPEAALVAFDTKVTAMQRHYLAQLQGQLAQSEWLAAADQIRKLKFIAKLKNEVERVEDQLLG</sequence>
<feature type="chain" id="PRO_1000083051" description="Co-chaperone protein HscB homolog">
    <location>
        <begin position="1"/>
        <end position="171"/>
    </location>
</feature>
<feature type="domain" description="J" evidence="1">
    <location>
        <begin position="2"/>
        <end position="74"/>
    </location>
</feature>
<evidence type="ECO:0000255" key="1">
    <source>
        <dbReference type="HAMAP-Rule" id="MF_00682"/>
    </source>
</evidence>
<proteinExistence type="inferred from homology"/>
<keyword id="KW-0143">Chaperone</keyword>
<protein>
    <recommendedName>
        <fullName evidence="1">Co-chaperone protein HscB homolog</fullName>
    </recommendedName>
</protein>
<organism>
    <name type="scientific">Vibrio cholerae serotype O1 (strain ATCC 39541 / Classical Ogawa 395 / O395)</name>
    <dbReference type="NCBI Taxonomy" id="345073"/>
    <lineage>
        <taxon>Bacteria</taxon>
        <taxon>Pseudomonadati</taxon>
        <taxon>Pseudomonadota</taxon>
        <taxon>Gammaproteobacteria</taxon>
        <taxon>Vibrionales</taxon>
        <taxon>Vibrionaceae</taxon>
        <taxon>Vibrio</taxon>
    </lineage>
</organism>
<gene>
    <name evidence="1" type="primary">hscB</name>
    <name type="ordered locus">VC0395_A0280</name>
    <name type="ordered locus">VC395_0768</name>
</gene>
<dbReference type="EMBL" id="CP000627">
    <property type="protein sequence ID" value="ABQ19693.1"/>
    <property type="molecule type" value="Genomic_DNA"/>
</dbReference>
<dbReference type="EMBL" id="CP001235">
    <property type="protein sequence ID" value="ACP08785.1"/>
    <property type="molecule type" value="Genomic_DNA"/>
</dbReference>
<dbReference type="RefSeq" id="WP_001105747.1">
    <property type="nucleotide sequence ID" value="NZ_JAACZH010000017.1"/>
</dbReference>
<dbReference type="SMR" id="A5F3G7"/>
<dbReference type="KEGG" id="vco:VC0395_A0280"/>
<dbReference type="KEGG" id="vcr:VC395_0768"/>
<dbReference type="PATRIC" id="fig|345073.21.peg.742"/>
<dbReference type="eggNOG" id="COG1076">
    <property type="taxonomic scope" value="Bacteria"/>
</dbReference>
<dbReference type="HOGENOM" id="CLU_068529_2_0_6"/>
<dbReference type="OrthoDB" id="287587at2"/>
<dbReference type="Proteomes" id="UP000000249">
    <property type="component" value="Chromosome 2"/>
</dbReference>
<dbReference type="GO" id="GO:1990230">
    <property type="term" value="C:iron-sulfur cluster transfer complex"/>
    <property type="evidence" value="ECO:0007669"/>
    <property type="project" value="TreeGrafter"/>
</dbReference>
<dbReference type="GO" id="GO:0001671">
    <property type="term" value="F:ATPase activator activity"/>
    <property type="evidence" value="ECO:0007669"/>
    <property type="project" value="InterPro"/>
</dbReference>
<dbReference type="GO" id="GO:0051087">
    <property type="term" value="F:protein-folding chaperone binding"/>
    <property type="evidence" value="ECO:0007669"/>
    <property type="project" value="InterPro"/>
</dbReference>
<dbReference type="GO" id="GO:0044571">
    <property type="term" value="P:[2Fe-2S] cluster assembly"/>
    <property type="evidence" value="ECO:0007669"/>
    <property type="project" value="InterPro"/>
</dbReference>
<dbReference type="GO" id="GO:0051259">
    <property type="term" value="P:protein complex oligomerization"/>
    <property type="evidence" value="ECO:0007669"/>
    <property type="project" value="InterPro"/>
</dbReference>
<dbReference type="GO" id="GO:0006457">
    <property type="term" value="P:protein folding"/>
    <property type="evidence" value="ECO:0007669"/>
    <property type="project" value="UniProtKB-UniRule"/>
</dbReference>
<dbReference type="CDD" id="cd06257">
    <property type="entry name" value="DnaJ"/>
    <property type="match status" value="1"/>
</dbReference>
<dbReference type="FunFam" id="1.10.287.110:FF:000008">
    <property type="entry name" value="Co-chaperone protein HscB"/>
    <property type="match status" value="1"/>
</dbReference>
<dbReference type="Gene3D" id="1.10.287.110">
    <property type="entry name" value="DnaJ domain"/>
    <property type="match status" value="1"/>
</dbReference>
<dbReference type="Gene3D" id="1.20.1280.20">
    <property type="entry name" value="HscB, C-terminal domain"/>
    <property type="match status" value="1"/>
</dbReference>
<dbReference type="HAMAP" id="MF_00682">
    <property type="entry name" value="HscB"/>
    <property type="match status" value="1"/>
</dbReference>
<dbReference type="InterPro" id="IPR001623">
    <property type="entry name" value="DnaJ_domain"/>
</dbReference>
<dbReference type="InterPro" id="IPR004640">
    <property type="entry name" value="HscB"/>
</dbReference>
<dbReference type="InterPro" id="IPR036386">
    <property type="entry name" value="HscB_C_sf"/>
</dbReference>
<dbReference type="InterPro" id="IPR009073">
    <property type="entry name" value="HscB_oligo_C"/>
</dbReference>
<dbReference type="InterPro" id="IPR036869">
    <property type="entry name" value="J_dom_sf"/>
</dbReference>
<dbReference type="NCBIfam" id="TIGR00714">
    <property type="entry name" value="hscB"/>
    <property type="match status" value="1"/>
</dbReference>
<dbReference type="NCBIfam" id="NF003449">
    <property type="entry name" value="PRK05014.1"/>
    <property type="match status" value="1"/>
</dbReference>
<dbReference type="PANTHER" id="PTHR14021">
    <property type="entry name" value="IRON-SULFUR CLUSTER CO-CHAPERONE PROTEIN HSCB"/>
    <property type="match status" value="1"/>
</dbReference>
<dbReference type="PANTHER" id="PTHR14021:SF15">
    <property type="entry name" value="IRON-SULFUR CLUSTER CO-CHAPERONE PROTEIN HSCB"/>
    <property type="match status" value="1"/>
</dbReference>
<dbReference type="Pfam" id="PF00226">
    <property type="entry name" value="DnaJ"/>
    <property type="match status" value="1"/>
</dbReference>
<dbReference type="Pfam" id="PF07743">
    <property type="entry name" value="HSCB_C"/>
    <property type="match status" value="1"/>
</dbReference>
<dbReference type="SMART" id="SM00271">
    <property type="entry name" value="DnaJ"/>
    <property type="match status" value="1"/>
</dbReference>
<dbReference type="SUPFAM" id="SSF46565">
    <property type="entry name" value="Chaperone J-domain"/>
    <property type="match status" value="1"/>
</dbReference>
<dbReference type="SUPFAM" id="SSF47144">
    <property type="entry name" value="HSC20 (HSCB), C-terminal oligomerisation domain"/>
    <property type="match status" value="1"/>
</dbReference>
<dbReference type="PROSITE" id="PS50076">
    <property type="entry name" value="DNAJ_2"/>
    <property type="match status" value="1"/>
</dbReference>
<reference key="1">
    <citation type="submission" date="2007-03" db="EMBL/GenBank/DDBJ databases">
        <authorList>
            <person name="Heidelberg J."/>
        </authorList>
    </citation>
    <scope>NUCLEOTIDE SEQUENCE [LARGE SCALE GENOMIC DNA]</scope>
    <source>
        <strain>ATCC 39541 / Classical Ogawa 395 / O395</strain>
    </source>
</reference>
<reference key="2">
    <citation type="journal article" date="2008" name="PLoS ONE">
        <title>A recalibrated molecular clock and independent origins for the cholera pandemic clones.</title>
        <authorList>
            <person name="Feng L."/>
            <person name="Reeves P.R."/>
            <person name="Lan R."/>
            <person name="Ren Y."/>
            <person name="Gao C."/>
            <person name="Zhou Z."/>
            <person name="Ren Y."/>
            <person name="Cheng J."/>
            <person name="Wang W."/>
            <person name="Wang J."/>
            <person name="Qian W."/>
            <person name="Li D."/>
            <person name="Wang L."/>
        </authorList>
    </citation>
    <scope>NUCLEOTIDE SEQUENCE [LARGE SCALE GENOMIC DNA]</scope>
    <source>
        <strain>ATCC 39541 / Classical Ogawa 395 / O395</strain>
    </source>
</reference>
<comment type="function">
    <text evidence="1">Co-chaperone involved in the maturation of iron-sulfur cluster-containing proteins. Seems to help targeting proteins to be folded toward HscA.</text>
</comment>
<comment type="subunit">
    <text evidence="1">Interacts with HscA and stimulates its ATPase activity.</text>
</comment>
<comment type="similarity">
    <text evidence="1">Belongs to the HscB family.</text>
</comment>
<accession>A5F3G7</accession>
<accession>C3LY61</accession>
<name>HSCB_VIBC3</name>